<gene>
    <name evidence="1" type="primary">rnc</name>
    <name type="ordered locus">Cag_1659</name>
</gene>
<protein>
    <recommendedName>
        <fullName evidence="1">Ribonuclease 3</fullName>
        <ecNumber evidence="1">3.1.26.3</ecNumber>
    </recommendedName>
    <alternativeName>
        <fullName evidence="1">Ribonuclease III</fullName>
        <shortName evidence="1">RNase III</shortName>
    </alternativeName>
</protein>
<accession>Q3AQ14</accession>
<feature type="chain" id="PRO_0000228515" description="Ribonuclease 3">
    <location>
        <begin position="1"/>
        <end position="248"/>
    </location>
</feature>
<feature type="domain" description="RNase III" evidence="1">
    <location>
        <begin position="6"/>
        <end position="136"/>
    </location>
</feature>
<feature type="domain" description="DRBM" evidence="1">
    <location>
        <begin position="163"/>
        <end position="231"/>
    </location>
</feature>
<feature type="active site" evidence="1">
    <location>
        <position position="53"/>
    </location>
</feature>
<feature type="active site" evidence="1">
    <location>
        <position position="125"/>
    </location>
</feature>
<feature type="binding site" evidence="1">
    <location>
        <position position="49"/>
    </location>
    <ligand>
        <name>Mg(2+)</name>
        <dbReference type="ChEBI" id="CHEBI:18420"/>
    </ligand>
</feature>
<feature type="binding site" evidence="1">
    <location>
        <position position="122"/>
    </location>
    <ligand>
        <name>Mg(2+)</name>
        <dbReference type="ChEBI" id="CHEBI:18420"/>
    </ligand>
</feature>
<feature type="binding site" evidence="1">
    <location>
        <position position="125"/>
    </location>
    <ligand>
        <name>Mg(2+)</name>
        <dbReference type="ChEBI" id="CHEBI:18420"/>
    </ligand>
</feature>
<dbReference type="EC" id="3.1.26.3" evidence="1"/>
<dbReference type="EMBL" id="CP000108">
    <property type="protein sequence ID" value="ABB28911.1"/>
    <property type="molecule type" value="Genomic_DNA"/>
</dbReference>
<dbReference type="SMR" id="Q3AQ14"/>
<dbReference type="STRING" id="340177.Cag_1659"/>
<dbReference type="KEGG" id="cch:Cag_1659"/>
<dbReference type="eggNOG" id="COG0571">
    <property type="taxonomic scope" value="Bacteria"/>
</dbReference>
<dbReference type="HOGENOM" id="CLU_000907_1_0_10"/>
<dbReference type="OrthoDB" id="9805026at2"/>
<dbReference type="GO" id="GO:0005737">
    <property type="term" value="C:cytoplasm"/>
    <property type="evidence" value="ECO:0007669"/>
    <property type="project" value="UniProtKB-SubCell"/>
</dbReference>
<dbReference type="GO" id="GO:0003725">
    <property type="term" value="F:double-stranded RNA binding"/>
    <property type="evidence" value="ECO:0007669"/>
    <property type="project" value="TreeGrafter"/>
</dbReference>
<dbReference type="GO" id="GO:0046872">
    <property type="term" value="F:metal ion binding"/>
    <property type="evidence" value="ECO:0007669"/>
    <property type="project" value="UniProtKB-KW"/>
</dbReference>
<dbReference type="GO" id="GO:0004525">
    <property type="term" value="F:ribonuclease III activity"/>
    <property type="evidence" value="ECO:0007669"/>
    <property type="project" value="UniProtKB-UniRule"/>
</dbReference>
<dbReference type="GO" id="GO:0019843">
    <property type="term" value="F:rRNA binding"/>
    <property type="evidence" value="ECO:0007669"/>
    <property type="project" value="UniProtKB-KW"/>
</dbReference>
<dbReference type="GO" id="GO:0006397">
    <property type="term" value="P:mRNA processing"/>
    <property type="evidence" value="ECO:0007669"/>
    <property type="project" value="UniProtKB-UniRule"/>
</dbReference>
<dbReference type="GO" id="GO:0010468">
    <property type="term" value="P:regulation of gene expression"/>
    <property type="evidence" value="ECO:0007669"/>
    <property type="project" value="TreeGrafter"/>
</dbReference>
<dbReference type="GO" id="GO:0006364">
    <property type="term" value="P:rRNA processing"/>
    <property type="evidence" value="ECO:0007669"/>
    <property type="project" value="UniProtKB-UniRule"/>
</dbReference>
<dbReference type="GO" id="GO:0008033">
    <property type="term" value="P:tRNA processing"/>
    <property type="evidence" value="ECO:0007669"/>
    <property type="project" value="UniProtKB-KW"/>
</dbReference>
<dbReference type="CDD" id="cd10845">
    <property type="entry name" value="DSRM_RNAse_III_family"/>
    <property type="match status" value="1"/>
</dbReference>
<dbReference type="CDD" id="cd00593">
    <property type="entry name" value="RIBOc"/>
    <property type="match status" value="1"/>
</dbReference>
<dbReference type="FunFam" id="1.10.1520.10:FF:000001">
    <property type="entry name" value="Ribonuclease 3"/>
    <property type="match status" value="1"/>
</dbReference>
<dbReference type="Gene3D" id="3.30.160.20">
    <property type="match status" value="1"/>
</dbReference>
<dbReference type="Gene3D" id="1.10.1520.10">
    <property type="entry name" value="Ribonuclease III domain"/>
    <property type="match status" value="1"/>
</dbReference>
<dbReference type="HAMAP" id="MF_00104">
    <property type="entry name" value="RNase_III"/>
    <property type="match status" value="1"/>
</dbReference>
<dbReference type="InterPro" id="IPR014720">
    <property type="entry name" value="dsRBD_dom"/>
</dbReference>
<dbReference type="InterPro" id="IPR011907">
    <property type="entry name" value="RNase_III"/>
</dbReference>
<dbReference type="InterPro" id="IPR000999">
    <property type="entry name" value="RNase_III_dom"/>
</dbReference>
<dbReference type="InterPro" id="IPR036389">
    <property type="entry name" value="RNase_III_sf"/>
</dbReference>
<dbReference type="NCBIfam" id="TIGR02191">
    <property type="entry name" value="RNaseIII"/>
    <property type="match status" value="1"/>
</dbReference>
<dbReference type="PANTHER" id="PTHR11207:SF0">
    <property type="entry name" value="RIBONUCLEASE 3"/>
    <property type="match status" value="1"/>
</dbReference>
<dbReference type="PANTHER" id="PTHR11207">
    <property type="entry name" value="RIBONUCLEASE III"/>
    <property type="match status" value="1"/>
</dbReference>
<dbReference type="Pfam" id="PF00035">
    <property type="entry name" value="dsrm"/>
    <property type="match status" value="1"/>
</dbReference>
<dbReference type="Pfam" id="PF14622">
    <property type="entry name" value="Ribonucleas_3_3"/>
    <property type="match status" value="1"/>
</dbReference>
<dbReference type="SMART" id="SM00358">
    <property type="entry name" value="DSRM"/>
    <property type="match status" value="1"/>
</dbReference>
<dbReference type="SMART" id="SM00535">
    <property type="entry name" value="RIBOc"/>
    <property type="match status" value="1"/>
</dbReference>
<dbReference type="SUPFAM" id="SSF54768">
    <property type="entry name" value="dsRNA-binding domain-like"/>
    <property type="match status" value="1"/>
</dbReference>
<dbReference type="SUPFAM" id="SSF69065">
    <property type="entry name" value="RNase III domain-like"/>
    <property type="match status" value="1"/>
</dbReference>
<dbReference type="PROSITE" id="PS50137">
    <property type="entry name" value="DS_RBD"/>
    <property type="match status" value="1"/>
</dbReference>
<dbReference type="PROSITE" id="PS00517">
    <property type="entry name" value="RNASE_3_1"/>
    <property type="match status" value="1"/>
</dbReference>
<dbReference type="PROSITE" id="PS50142">
    <property type="entry name" value="RNASE_3_2"/>
    <property type="match status" value="1"/>
</dbReference>
<evidence type="ECO:0000255" key="1">
    <source>
        <dbReference type="HAMAP-Rule" id="MF_00104"/>
    </source>
</evidence>
<proteinExistence type="inferred from homology"/>
<organism>
    <name type="scientific">Chlorobium chlorochromatii (strain CaD3)</name>
    <dbReference type="NCBI Taxonomy" id="340177"/>
    <lineage>
        <taxon>Bacteria</taxon>
        <taxon>Pseudomonadati</taxon>
        <taxon>Chlorobiota</taxon>
        <taxon>Chlorobiia</taxon>
        <taxon>Chlorobiales</taxon>
        <taxon>Chlorobiaceae</taxon>
        <taxon>Chlorobium/Pelodictyon group</taxon>
        <taxon>Chlorobium</taxon>
    </lineage>
</organism>
<reference key="1">
    <citation type="submission" date="2005-08" db="EMBL/GenBank/DDBJ databases">
        <title>Complete sequence of Chlorobium chlorochromatii CaD3.</title>
        <authorList>
            <consortium name="US DOE Joint Genome Institute"/>
            <person name="Copeland A."/>
            <person name="Lucas S."/>
            <person name="Lapidus A."/>
            <person name="Barry K."/>
            <person name="Detter J.C."/>
            <person name="Glavina T."/>
            <person name="Hammon N."/>
            <person name="Israni S."/>
            <person name="Pitluck S."/>
            <person name="Bryant D."/>
            <person name="Schmutz J."/>
            <person name="Larimer F."/>
            <person name="Land M."/>
            <person name="Kyrpides N."/>
            <person name="Ivanova N."/>
            <person name="Richardson P."/>
        </authorList>
    </citation>
    <scope>NUCLEOTIDE SEQUENCE [LARGE SCALE GENOMIC DNA]</scope>
    <source>
        <strain>CaD3</strain>
    </source>
</reference>
<keyword id="KW-0963">Cytoplasm</keyword>
<keyword id="KW-0255">Endonuclease</keyword>
<keyword id="KW-0378">Hydrolase</keyword>
<keyword id="KW-0460">Magnesium</keyword>
<keyword id="KW-0479">Metal-binding</keyword>
<keyword id="KW-0507">mRNA processing</keyword>
<keyword id="KW-0540">Nuclease</keyword>
<keyword id="KW-0694">RNA-binding</keyword>
<keyword id="KW-0698">rRNA processing</keyword>
<keyword id="KW-0699">rRNA-binding</keyword>
<keyword id="KW-0819">tRNA processing</keyword>
<comment type="function">
    <text evidence="1">Digests double-stranded RNA. Involved in the processing of primary rRNA transcript to yield the immediate precursors to the large and small rRNAs (23S and 16S). Processes some mRNAs, and tRNAs when they are encoded in the rRNA operon. Processes pre-crRNA and tracrRNA of type II CRISPR loci if present in the organism.</text>
</comment>
<comment type="catalytic activity">
    <reaction evidence="1">
        <text>Endonucleolytic cleavage to 5'-phosphomonoester.</text>
        <dbReference type="EC" id="3.1.26.3"/>
    </reaction>
</comment>
<comment type="cofactor">
    <cofactor evidence="1">
        <name>Mg(2+)</name>
        <dbReference type="ChEBI" id="CHEBI:18420"/>
    </cofactor>
</comment>
<comment type="subunit">
    <text evidence="1">Homodimer.</text>
</comment>
<comment type="subcellular location">
    <subcellularLocation>
        <location evidence="1">Cytoplasm</location>
    </subcellularLocation>
</comment>
<comment type="similarity">
    <text evidence="1">Belongs to the ribonuclease III family.</text>
</comment>
<name>RNC_CHLCH</name>
<sequence>MPPETLAYLQTLIGSLDGNARLYQTALTHRSVIGNTALSHHNESNQRLEFLGDAVLGLLISHFLFQNFPASAEGDLSKTRAKIVNSKSLACFARSIGLGEHLLLGESAAHYNIRDSESALADAFESLIGAIYLDKGLDAAYGFVDKHIIHHQSFSAIVASEQNYKSCLIEYSQAHHVAAPVYTVIAEHGAEHDKEFTVEVSCNNIKGCGTARRKKDAEQLAAKEAMERIIALQPLPHEPKDEENSTTT</sequence>